<keyword id="KW-0007">Acetylation</keyword>
<keyword id="KW-0963">Cytoplasm</keyword>
<keyword id="KW-0206">Cytoskeleton</keyword>
<keyword id="KW-0342">GTP-binding</keyword>
<keyword id="KW-0378">Hydrolase</keyword>
<keyword id="KW-0460">Magnesium</keyword>
<keyword id="KW-0479">Metal-binding</keyword>
<keyword id="KW-0493">Microtubule</keyword>
<keyword id="KW-0547">Nucleotide-binding</keyword>
<reference key="1">
    <citation type="submission" date="1993-04" db="EMBL/GenBank/DDBJ databases">
        <title>Characterization of the alpha and beta tubulin gene families from Anemia phyllitidis L.Sw.</title>
        <authorList>
            <person name="Moepps B."/>
            <person name="Maucher H.P."/>
            <person name="Bogenberger J.M."/>
            <person name="Schraudolf H."/>
        </authorList>
    </citation>
    <scope>NUCLEOTIDE SEQUENCE [MRNA]</scope>
</reference>
<dbReference type="EC" id="3.6.5.-" evidence="2"/>
<dbReference type="EMBL" id="X69183">
    <property type="protein sequence ID" value="CAA48927.1"/>
    <property type="molecule type" value="mRNA"/>
</dbReference>
<dbReference type="PIR" id="S32666">
    <property type="entry name" value="S32666"/>
</dbReference>
<dbReference type="GO" id="GO:0005737">
    <property type="term" value="C:cytoplasm"/>
    <property type="evidence" value="ECO:0007669"/>
    <property type="project" value="UniProtKB-KW"/>
</dbReference>
<dbReference type="GO" id="GO:0005874">
    <property type="term" value="C:microtubule"/>
    <property type="evidence" value="ECO:0007669"/>
    <property type="project" value="UniProtKB-KW"/>
</dbReference>
<dbReference type="GO" id="GO:0005525">
    <property type="term" value="F:GTP binding"/>
    <property type="evidence" value="ECO:0007669"/>
    <property type="project" value="UniProtKB-KW"/>
</dbReference>
<dbReference type="GO" id="GO:0016787">
    <property type="term" value="F:hydrolase activity"/>
    <property type="evidence" value="ECO:0007669"/>
    <property type="project" value="UniProtKB-KW"/>
</dbReference>
<dbReference type="GO" id="GO:0046872">
    <property type="term" value="F:metal ion binding"/>
    <property type="evidence" value="ECO:0007669"/>
    <property type="project" value="UniProtKB-KW"/>
</dbReference>
<dbReference type="GO" id="GO:0005200">
    <property type="term" value="F:structural constituent of cytoskeleton"/>
    <property type="evidence" value="ECO:0007669"/>
    <property type="project" value="InterPro"/>
</dbReference>
<dbReference type="GO" id="GO:0007017">
    <property type="term" value="P:microtubule-based process"/>
    <property type="evidence" value="ECO:0007669"/>
    <property type="project" value="InterPro"/>
</dbReference>
<dbReference type="CDD" id="cd02186">
    <property type="entry name" value="alpha_tubulin"/>
    <property type="match status" value="1"/>
</dbReference>
<dbReference type="FunFam" id="1.10.287.600:FF:000005">
    <property type="entry name" value="Tubulin alpha chain"/>
    <property type="match status" value="1"/>
</dbReference>
<dbReference type="FunFam" id="3.30.1330.20:FF:000001">
    <property type="entry name" value="Tubulin alpha chain"/>
    <property type="match status" value="1"/>
</dbReference>
<dbReference type="FunFam" id="3.40.50.1440:FF:000004">
    <property type="entry name" value="Tubulin alpha chain"/>
    <property type="match status" value="1"/>
</dbReference>
<dbReference type="Gene3D" id="1.10.287.600">
    <property type="entry name" value="Helix hairpin bin"/>
    <property type="match status" value="1"/>
</dbReference>
<dbReference type="Gene3D" id="3.30.1330.20">
    <property type="entry name" value="Tubulin/FtsZ, C-terminal domain"/>
    <property type="match status" value="1"/>
</dbReference>
<dbReference type="Gene3D" id="3.40.50.1440">
    <property type="entry name" value="Tubulin/FtsZ, GTPase domain"/>
    <property type="match status" value="1"/>
</dbReference>
<dbReference type="InterPro" id="IPR002452">
    <property type="entry name" value="Alpha_tubulin"/>
</dbReference>
<dbReference type="InterPro" id="IPR008280">
    <property type="entry name" value="Tub_FtsZ_C"/>
</dbReference>
<dbReference type="InterPro" id="IPR000217">
    <property type="entry name" value="Tubulin"/>
</dbReference>
<dbReference type="InterPro" id="IPR037103">
    <property type="entry name" value="Tubulin/FtsZ-like_C"/>
</dbReference>
<dbReference type="InterPro" id="IPR018316">
    <property type="entry name" value="Tubulin/FtsZ_2-layer-sand-dom"/>
</dbReference>
<dbReference type="InterPro" id="IPR036525">
    <property type="entry name" value="Tubulin/FtsZ_GTPase_sf"/>
</dbReference>
<dbReference type="InterPro" id="IPR023123">
    <property type="entry name" value="Tubulin_C"/>
</dbReference>
<dbReference type="InterPro" id="IPR003008">
    <property type="entry name" value="Tubulin_FtsZ_GTPase"/>
</dbReference>
<dbReference type="PANTHER" id="PTHR11588">
    <property type="entry name" value="TUBULIN"/>
    <property type="match status" value="1"/>
</dbReference>
<dbReference type="Pfam" id="PF00091">
    <property type="entry name" value="Tubulin"/>
    <property type="match status" value="1"/>
</dbReference>
<dbReference type="Pfam" id="PF03953">
    <property type="entry name" value="Tubulin_C"/>
    <property type="match status" value="1"/>
</dbReference>
<dbReference type="PRINTS" id="PR01162">
    <property type="entry name" value="ALPHATUBULIN"/>
</dbReference>
<dbReference type="PRINTS" id="PR01161">
    <property type="entry name" value="TUBULIN"/>
</dbReference>
<dbReference type="SMART" id="SM00864">
    <property type="entry name" value="Tubulin"/>
    <property type="match status" value="1"/>
</dbReference>
<dbReference type="SMART" id="SM00865">
    <property type="entry name" value="Tubulin_C"/>
    <property type="match status" value="1"/>
</dbReference>
<dbReference type="SUPFAM" id="SSF55307">
    <property type="entry name" value="Tubulin C-terminal domain-like"/>
    <property type="match status" value="1"/>
</dbReference>
<dbReference type="SUPFAM" id="SSF52490">
    <property type="entry name" value="Tubulin nucleotide-binding domain-like"/>
    <property type="match status" value="1"/>
</dbReference>
<dbReference type="PROSITE" id="PS00227">
    <property type="entry name" value="TUBULIN"/>
    <property type="match status" value="1"/>
</dbReference>
<accession>P33623</accession>
<gene>
    <name type="primary">TUBA1</name>
</gene>
<sequence length="451" mass="49786">MRECISIHIGQAGIQVGNARWELYCLEHGIQPDGQMPSDKTVGGGDDAFNTFFSETGAGKHVPRAVFLDLEPTVIDEVRTGTYRQLFHPEQLISGKEDAANNFARGHYTIGKEIVDLCLDRIRKLADNCTGLQGFLVFHAVGGXTGSGLGSLLLERLSVDYGKKSKLGFTVYPSPQVSTSVVEPYNSVLSTHSLLEHTDVSVLLDNEAIYDICRRSLDIERPTYTNLNRLVSQVISSLTASLRFDGALNVDVTEFQTNLVPYPRIHFMLSSYAPVISAEKAYHEQLSVAEITNSAFEPASMMAKCDPRHGKYMACCLMYRGDVVPKDVNAAVATIKTKRTIQFVDWCPTGFKCGINYQPPTVVPGGDLAKVQRAVCMISNSTSVAEVFSRIDHKFDLMYAKRAFVHWYVGEGMEEGEFSEAREDLAALEKDYEEVGAESGEGEEGDEGEEY</sequence>
<comment type="function">
    <text>Tubulin is the major constituent of microtubules, a cylinder consisting of laterally associated linear protofilaments composed of alpha- and beta-tubulin heterodimers. Microtubules grow by the addition of GTP-tubulin dimers to the microtubule end, where a stabilizing cap forms. Below the cap, tubulin dimers are in GDP-bound state, owing to GTPase activity of alpha-tubulin.</text>
</comment>
<comment type="catalytic activity">
    <reaction evidence="2">
        <text>GTP + H2O = GDP + phosphate + H(+)</text>
        <dbReference type="Rhea" id="RHEA:19669"/>
        <dbReference type="ChEBI" id="CHEBI:15377"/>
        <dbReference type="ChEBI" id="CHEBI:15378"/>
        <dbReference type="ChEBI" id="CHEBI:37565"/>
        <dbReference type="ChEBI" id="CHEBI:43474"/>
        <dbReference type="ChEBI" id="CHEBI:58189"/>
    </reaction>
    <physiologicalReaction direction="left-to-right" evidence="2">
        <dbReference type="Rhea" id="RHEA:19670"/>
    </physiologicalReaction>
</comment>
<comment type="cofactor">
    <cofactor evidence="2">
        <name>Mg(2+)</name>
        <dbReference type="ChEBI" id="CHEBI:18420"/>
    </cofactor>
</comment>
<comment type="subunit">
    <text>Dimer of alpha and beta chains. A typical microtubule is a hollow water-filled tube with an outer diameter of 25 nm and an inner diameter of 15 nM. Alpha-beta heterodimers associate head-to-tail to form protofilaments running lengthwise along the microtubule wall with the beta-tubulin subunit facing the microtubule plus end conferring a structural polarity. Microtubules usually have 13 protofilaments but different protofilament numbers can be found in some organisms and specialized cells.</text>
</comment>
<comment type="subcellular location">
    <subcellularLocation>
        <location>Cytoplasm</location>
        <location>Cytoskeleton</location>
    </subcellularLocation>
</comment>
<comment type="PTM">
    <text evidence="1">Undergoes a tyrosination/detyrosination cycle, the cyclic removal and re-addition of a C-terminal tyrosine residue by the enzymes tubulin tyrosine carboxypeptidase (TTCP) and tubulin tyrosine ligase (TTL), respectively.</text>
</comment>
<comment type="PTM">
    <text evidence="1">Acetylation of alpha chains at Lys-40 stabilizes microtubules and affects affinity and processivity of microtubule motors. This modification has a role in multiple cellular functions, ranging from cell motility, cell cycle progression or cell differentiation to intracellular trafficking and signaling (By similarity).</text>
</comment>
<comment type="similarity">
    <text evidence="4">Belongs to the tubulin family.</text>
</comment>
<evidence type="ECO:0000250" key="1"/>
<evidence type="ECO:0000250" key="2">
    <source>
        <dbReference type="UniProtKB" id="P68363"/>
    </source>
</evidence>
<evidence type="ECO:0000256" key="3">
    <source>
        <dbReference type="SAM" id="MobiDB-lite"/>
    </source>
</evidence>
<evidence type="ECO:0000305" key="4"/>
<organism>
    <name type="scientific">Anemia phyllitidis</name>
    <name type="common">Fern</name>
    <name type="synonym">Osmunda phyllitidis</name>
    <dbReference type="NCBI Taxonomy" id="12940"/>
    <lineage>
        <taxon>Eukaryota</taxon>
        <taxon>Viridiplantae</taxon>
        <taxon>Streptophyta</taxon>
        <taxon>Embryophyta</taxon>
        <taxon>Tracheophyta</taxon>
        <taxon>Polypodiopsida</taxon>
        <taxon>Polypodiidae</taxon>
        <taxon>Schizaeales</taxon>
        <taxon>Anemiaceae</taxon>
        <taxon>Anemia</taxon>
    </lineage>
</organism>
<feature type="chain" id="PRO_0000048133" description="Tubulin alpha-1 chain">
    <location>
        <begin position="1"/>
        <end position="451"/>
    </location>
</feature>
<feature type="region of interest" description="Disordered" evidence="3">
    <location>
        <begin position="429"/>
        <end position="451"/>
    </location>
</feature>
<feature type="compositionally biased region" description="Acidic residues" evidence="3">
    <location>
        <begin position="431"/>
        <end position="451"/>
    </location>
</feature>
<feature type="active site" evidence="2">
    <location>
        <position position="254"/>
    </location>
</feature>
<feature type="binding site" evidence="2">
    <location>
        <position position="11"/>
    </location>
    <ligand>
        <name>GTP</name>
        <dbReference type="ChEBI" id="CHEBI:37565"/>
    </ligand>
</feature>
<feature type="binding site" evidence="2">
    <location>
        <position position="71"/>
    </location>
    <ligand>
        <name>GTP</name>
        <dbReference type="ChEBI" id="CHEBI:37565"/>
    </ligand>
</feature>
<feature type="binding site" evidence="2">
    <location>
        <position position="71"/>
    </location>
    <ligand>
        <name>Mg(2+)</name>
        <dbReference type="ChEBI" id="CHEBI:18420"/>
    </ligand>
</feature>
<feature type="binding site" evidence="2">
    <location>
        <position position="145"/>
    </location>
    <ligand>
        <name>GTP</name>
        <dbReference type="ChEBI" id="CHEBI:37565"/>
    </ligand>
</feature>
<feature type="binding site" evidence="2">
    <location>
        <position position="179"/>
    </location>
    <ligand>
        <name>GTP</name>
        <dbReference type="ChEBI" id="CHEBI:37565"/>
    </ligand>
</feature>
<feature type="binding site" evidence="2">
    <location>
        <position position="206"/>
    </location>
    <ligand>
        <name>GTP</name>
        <dbReference type="ChEBI" id="CHEBI:37565"/>
    </ligand>
</feature>
<feature type="binding site" evidence="2">
    <location>
        <position position="228"/>
    </location>
    <ligand>
        <name>GTP</name>
        <dbReference type="ChEBI" id="CHEBI:37565"/>
    </ligand>
</feature>
<feature type="site" description="Involved in polymerization" evidence="1">
    <location>
        <position position="451"/>
    </location>
</feature>
<feature type="modified residue" description="N6-acetyllysine" evidence="1">
    <location>
        <position position="40"/>
    </location>
</feature>
<proteinExistence type="evidence at transcript level"/>
<name>TBA1_ANEPH</name>
<protein>
    <recommendedName>
        <fullName>Tubulin alpha-1 chain</fullName>
        <ecNumber evidence="2">3.6.5.-</ecNumber>
    </recommendedName>
</protein>